<feature type="chain" id="PRO_0000407320" description="Alpha-pyrone synthesis polyketide synthase-like Pks18">
    <location>
        <begin position="1"/>
        <end position="393"/>
    </location>
</feature>
<feature type="region of interest" description="Disordered" evidence="1">
    <location>
        <begin position="1"/>
        <end position="26"/>
    </location>
</feature>
<feature type="active site" description="Nucleophile" evidence="6">
    <location>
        <position position="175"/>
    </location>
</feature>
<feature type="binding site" evidence="3">
    <location>
        <position position="221"/>
    </location>
    <ligand>
        <name>substrate</name>
    </ligand>
</feature>
<feature type="site" description="Important for broad specificity for aliphatic long-chain acyl-CoA starter units">
    <location>
        <position position="205"/>
    </location>
</feature>
<feature type="site" description="Important for broad specificity for aliphatic long-chain acyl-CoA starter units">
    <location>
        <position position="209"/>
    </location>
</feature>
<feature type="mutagenesis site" description="Completely abolishes the polyketide synthase activity with lauroyl-CoA and palmitoyl-CoA." evidence="3">
    <original>T</original>
    <variation>F</variation>
    <location>
        <position position="144"/>
    </location>
</feature>
<feature type="mutagenesis site" description="Cannot be recovered in the soluble form." evidence="2">
    <original>A</original>
    <variation>F</variation>
    <variation>M</variation>
    <variation>T</variation>
    <location>
        <position position="148"/>
    </location>
</feature>
<feature type="mutagenesis site" description="Loss of polyketide synthase activity." evidence="3">
    <original>C</original>
    <variation>A</variation>
    <location>
        <position position="175"/>
    </location>
</feature>
<feature type="mutagenesis site" description="No significant change in polyketide synthase activity." evidence="3">
    <original>C</original>
    <variation>A</variation>
    <location>
        <position position="205"/>
    </location>
</feature>
<feature type="mutagenesis site" description="Efficiently catalyzed the synthesis of the triketide pyrone of the C6 starter unit and shows weak polyketide synthase activity with the C12 starter molecule." evidence="3">
    <original>C</original>
    <variation>F</variation>
    <location>
        <position position="205"/>
    </location>
</feature>
<feature type="mutagenesis site" description="Retained reasonable polyketide synthase activity with lauroyl-CoA but cannot use palmitoyl-CoA." evidence="3">
    <original>A</original>
    <variation>F</variation>
    <location>
        <position position="209"/>
    </location>
</feature>
<feature type="mutagenesis site" description="No significant change in polyketide synthase activity." evidence="3">
    <original>C</original>
    <variation>A</variation>
    <location>
        <position position="275"/>
    </location>
</feature>
<feature type="mutagenesis site" description="Unable to synthesize any polyketide products." evidence="2">
    <original>K</original>
    <variation>A</variation>
    <location>
        <position position="318"/>
    </location>
</feature>
<feature type="mutagenesis site" description="Increase in the synthesis of the tetraketide products." evidence="2">
    <original>L</original>
    <variation>S</variation>
    <location>
        <position position="348"/>
    </location>
</feature>
<feature type="strand" evidence="9">
    <location>
        <begin position="32"/>
        <end position="41"/>
    </location>
</feature>
<feature type="strand" evidence="9">
    <location>
        <begin position="46"/>
        <end position="48"/>
    </location>
</feature>
<feature type="helix" evidence="9">
    <location>
        <begin position="49"/>
        <end position="57"/>
    </location>
</feature>
<feature type="helix" evidence="9">
    <location>
        <begin position="68"/>
        <end position="74"/>
    </location>
</feature>
<feature type="strand" evidence="9">
    <location>
        <begin position="79"/>
        <end position="82"/>
    </location>
</feature>
<feature type="helix" evidence="9">
    <location>
        <begin position="92"/>
        <end position="95"/>
    </location>
</feature>
<feature type="strand" evidence="10">
    <location>
        <begin position="98"/>
        <end position="100"/>
    </location>
</feature>
<feature type="helix" evidence="9">
    <location>
        <begin position="102"/>
        <end position="125"/>
    </location>
</feature>
<feature type="helix" evidence="9">
    <location>
        <begin position="132"/>
        <end position="134"/>
    </location>
</feature>
<feature type="strand" evidence="9">
    <location>
        <begin position="135"/>
        <end position="144"/>
    </location>
</feature>
<feature type="helix" evidence="9">
    <location>
        <begin position="151"/>
        <end position="159"/>
    </location>
</feature>
<feature type="strand" evidence="9">
    <location>
        <begin position="166"/>
        <end position="172"/>
    </location>
</feature>
<feature type="helix" evidence="9">
    <location>
        <begin position="174"/>
        <end position="176"/>
    </location>
</feature>
<feature type="helix" evidence="9">
    <location>
        <begin position="177"/>
        <end position="191"/>
    </location>
</feature>
<feature type="strand" evidence="9">
    <location>
        <begin position="196"/>
        <end position="204"/>
    </location>
</feature>
<feature type="helix" evidence="9">
    <location>
        <begin position="206"/>
        <end position="208"/>
    </location>
</feature>
<feature type="helix" evidence="9">
    <location>
        <begin position="215"/>
        <end position="223"/>
    </location>
</feature>
<feature type="strand" evidence="9">
    <location>
        <begin position="226"/>
        <end position="236"/>
    </location>
</feature>
<feature type="strand" evidence="9">
    <location>
        <begin position="247"/>
        <end position="256"/>
    </location>
</feature>
<feature type="strand" evidence="9">
    <location>
        <begin position="263"/>
        <end position="269"/>
    </location>
</feature>
<feature type="strand" evidence="9">
    <location>
        <begin position="272"/>
        <end position="277"/>
    </location>
</feature>
<feature type="helix" evidence="9">
    <location>
        <begin position="281"/>
        <end position="299"/>
    </location>
</feature>
<feature type="helix" evidence="9">
    <location>
        <begin position="304"/>
        <end position="306"/>
    </location>
</feature>
<feature type="strand" evidence="9">
    <location>
        <begin position="310"/>
        <end position="312"/>
    </location>
</feature>
<feature type="helix" evidence="9">
    <location>
        <begin position="317"/>
        <end position="327"/>
    </location>
</feature>
<feature type="helix" evidence="9">
    <location>
        <begin position="331"/>
        <end position="334"/>
    </location>
</feature>
<feature type="helix" evidence="9">
    <location>
        <begin position="335"/>
        <end position="344"/>
    </location>
</feature>
<feature type="helix" evidence="9">
    <location>
        <begin position="350"/>
        <end position="361"/>
    </location>
</feature>
<feature type="strand" evidence="9">
    <location>
        <begin position="364"/>
        <end position="378"/>
    </location>
</feature>
<feature type="turn" evidence="9">
    <location>
        <begin position="379"/>
        <end position="381"/>
    </location>
</feature>
<feature type="strand" evidence="9">
    <location>
        <begin position="382"/>
        <end position="390"/>
    </location>
</feature>
<proteinExistence type="evidence at protein level"/>
<sequence>MNVSAESGAPRRAGQRHEVGLAQLPPAPPTTVAVIEGLATGTPRRVVNQSDAADRVAELFLDPGQRERIPRVYQKSRITTRRMAVDPLDAKFDVFRREPATIRDRMHLFYEHAVPLAVDVSKRALAGLPYRAAEIGLLVLATSTGFIAPGVDVAIVKELGLSPSISRVVVNFMGCAAAMNALGTATNYVRAHPAMKALVVCIELCSVNAVFADDINDVVIHSLFGDGCAALVIGASQVQEKLEPGKVVVRSSFSQLLDNTEDGIVLGVNHNGITCELSENLPGYIFSGVAPVVTEMLWDNGLQISDIDLWAIHPGGPKIIEQSVRSLGISAELAAQSWDVLARFGNMLSVSLIFVLETMVQQAESAKAISTGVAFAFGPGVTVEGMLFDIIRR</sequence>
<accession>P9WPF1</accession>
<accession>L0T6G2</accession>
<accession>Q79FQ0</accession>
<accession>Q7D8I1</accession>
<gene>
    <name type="primary">pks18</name>
    <name type="ordered locus">Rv1372</name>
</gene>
<protein>
    <recommendedName>
        <fullName>Alpha-pyrone synthesis polyketide synthase-like Pks18</fullName>
        <ecNumber evidence="2 3 4">2.3.1.-</ecNumber>
    </recommendedName>
    <alternativeName>
        <fullName>Alpha-pyrone synthesis polyketide synthase type III Pks18</fullName>
    </alternativeName>
    <alternativeName>
        <fullName>Chalcone synthase-like protein</fullName>
        <shortName>CHS-like</shortName>
    </alternativeName>
</protein>
<keyword id="KW-0002">3D-structure</keyword>
<keyword id="KW-0012">Acyltransferase</keyword>
<keyword id="KW-0276">Fatty acid metabolism</keyword>
<keyword id="KW-0443">Lipid metabolism</keyword>
<keyword id="KW-1185">Reference proteome</keyword>
<keyword id="KW-0808">Transferase</keyword>
<comment type="function">
    <text evidence="2 3 4">Involved in the biosynthesis of tri- and tetraketide alpha-pyrones. Pks18 catalyzes the extension of medium- and long-chain aliphatic acyl-CoA substrates by using malonyl-CoA as an extender molecule to synthesize polyketide products.</text>
</comment>
<comment type="catalytic activity">
    <reaction evidence="2 3">
        <text>hexanoyl-CoA + 2 malonyl-CoA + 2 H(+) = 4-hydroxy-6-pentylpyran-2-one + 2 CO2 + 3 CoA</text>
        <dbReference type="Rhea" id="RHEA:43452"/>
        <dbReference type="ChEBI" id="CHEBI:15378"/>
        <dbReference type="ChEBI" id="CHEBI:16526"/>
        <dbReference type="ChEBI" id="CHEBI:57287"/>
        <dbReference type="ChEBI" id="CHEBI:57384"/>
        <dbReference type="ChEBI" id="CHEBI:62620"/>
        <dbReference type="ChEBI" id="CHEBI:66958"/>
    </reaction>
    <physiologicalReaction direction="left-to-right" evidence="2 3">
        <dbReference type="Rhea" id="RHEA:43453"/>
    </physiologicalReaction>
</comment>
<comment type="catalytic activity">
    <reaction evidence="3">
        <text>octanoyl-CoA + 2 malonyl-CoA + 2 H(+) = 4-hydroxy-6-heptylpyran-2-one + 2 CO2 + 3 CoA</text>
        <dbReference type="Rhea" id="RHEA:44284"/>
        <dbReference type="ChEBI" id="CHEBI:15378"/>
        <dbReference type="ChEBI" id="CHEBI:16526"/>
        <dbReference type="ChEBI" id="CHEBI:57287"/>
        <dbReference type="ChEBI" id="CHEBI:57384"/>
        <dbReference type="ChEBI" id="CHEBI:57386"/>
        <dbReference type="ChEBI" id="CHEBI:84246"/>
    </reaction>
    <physiologicalReaction direction="left-to-right" evidence="3">
        <dbReference type="Rhea" id="RHEA:44285"/>
    </physiologicalReaction>
</comment>
<comment type="catalytic activity">
    <reaction evidence="2 3 4">
        <text>dodecanoyl-CoA + 2 malonyl-CoA + 2 H(+) = 4-hydroxy-6-undecylpyran-2-one + 2 CO2 + 3 CoA</text>
        <dbReference type="Rhea" id="RHEA:43460"/>
        <dbReference type="ChEBI" id="CHEBI:15378"/>
        <dbReference type="ChEBI" id="CHEBI:16526"/>
        <dbReference type="ChEBI" id="CHEBI:57287"/>
        <dbReference type="ChEBI" id="CHEBI:57375"/>
        <dbReference type="ChEBI" id="CHEBI:57384"/>
        <dbReference type="ChEBI" id="CHEBI:84149"/>
    </reaction>
    <physiologicalReaction direction="left-to-right" evidence="2 3 4">
        <dbReference type="Rhea" id="RHEA:43461"/>
    </physiologicalReaction>
</comment>
<comment type="catalytic activity">
    <reaction evidence="2 3 4">
        <text>dodecanoyl-CoA + 3 malonyl-CoA + 3 H(+) = 4-hydroxy-6-(2-oxotridecyl)pyran-2-one + 3 CO2 + 4 CoA</text>
        <dbReference type="Rhea" id="RHEA:43368"/>
        <dbReference type="ChEBI" id="CHEBI:15378"/>
        <dbReference type="ChEBI" id="CHEBI:16526"/>
        <dbReference type="ChEBI" id="CHEBI:57287"/>
        <dbReference type="ChEBI" id="CHEBI:57375"/>
        <dbReference type="ChEBI" id="CHEBI:57384"/>
        <dbReference type="ChEBI" id="CHEBI:84150"/>
    </reaction>
    <physiologicalReaction direction="left-to-right" evidence="2 3 4">
        <dbReference type="Rhea" id="RHEA:43369"/>
    </physiologicalReaction>
</comment>
<comment type="catalytic activity">
    <reaction evidence="2 3">
        <text>hexadecanoyl-CoA + 2 malonyl-CoA + 2 H(+) = 4-hydroxy-6-pentadecylpyran-2-one + 2 CO2 + 3 CoA</text>
        <dbReference type="Rhea" id="RHEA:44260"/>
        <dbReference type="ChEBI" id="CHEBI:15378"/>
        <dbReference type="ChEBI" id="CHEBI:16526"/>
        <dbReference type="ChEBI" id="CHEBI:57287"/>
        <dbReference type="ChEBI" id="CHEBI:57379"/>
        <dbReference type="ChEBI" id="CHEBI:57384"/>
        <dbReference type="ChEBI" id="CHEBI:84168"/>
    </reaction>
    <physiologicalReaction direction="left-to-right" evidence="2 3">
        <dbReference type="Rhea" id="RHEA:44261"/>
    </physiologicalReaction>
</comment>
<comment type="catalytic activity">
    <reaction evidence="2 3">
        <text>hexadecanoyl-CoA + 3 malonyl-CoA + 3 H(+) = 4-hydroxy-6-(2-oxoheptadecyl)pyran-2-one + 3 CO2 + 4 CoA</text>
        <dbReference type="Rhea" id="RHEA:44268"/>
        <dbReference type="ChEBI" id="CHEBI:15378"/>
        <dbReference type="ChEBI" id="CHEBI:16526"/>
        <dbReference type="ChEBI" id="CHEBI:57287"/>
        <dbReference type="ChEBI" id="CHEBI:57379"/>
        <dbReference type="ChEBI" id="CHEBI:57384"/>
        <dbReference type="ChEBI" id="CHEBI:84171"/>
    </reaction>
    <physiologicalReaction direction="left-to-right" evidence="2 3">
        <dbReference type="Rhea" id="RHEA:44269"/>
    </physiologicalReaction>
</comment>
<comment type="catalytic activity">
    <reaction evidence="2 4">
        <text>octadecanoyl-CoA + 2 malonyl-CoA + 2 H(+) = 4-hydroxy-6-heptadecylpyran-2-one + 2 CO2 + 3 CoA</text>
        <dbReference type="Rhea" id="RHEA:44280"/>
        <dbReference type="ChEBI" id="CHEBI:15378"/>
        <dbReference type="ChEBI" id="CHEBI:16526"/>
        <dbReference type="ChEBI" id="CHEBI:57287"/>
        <dbReference type="ChEBI" id="CHEBI:57384"/>
        <dbReference type="ChEBI" id="CHEBI:57394"/>
        <dbReference type="ChEBI" id="CHEBI:84169"/>
    </reaction>
    <physiologicalReaction direction="left-to-right" evidence="2 4">
        <dbReference type="Rhea" id="RHEA:44281"/>
    </physiologicalReaction>
</comment>
<comment type="catalytic activity">
    <reaction evidence="2 4">
        <text>octadecanoyl-CoA + 3 malonyl-CoA + 3 H(+) = 4-hydroxy-6-(2-oxononadecyl)pyran-2-one + 3 CO2 + 4 CoA</text>
        <dbReference type="Rhea" id="RHEA:44272"/>
        <dbReference type="ChEBI" id="CHEBI:15378"/>
        <dbReference type="ChEBI" id="CHEBI:16526"/>
        <dbReference type="ChEBI" id="CHEBI:57287"/>
        <dbReference type="ChEBI" id="CHEBI:57384"/>
        <dbReference type="ChEBI" id="CHEBI:57394"/>
        <dbReference type="ChEBI" id="CHEBI:84172"/>
    </reaction>
    <physiologicalReaction direction="left-to-right" evidence="2 4">
        <dbReference type="Rhea" id="RHEA:44273"/>
    </physiologicalReaction>
</comment>
<comment type="catalytic activity">
    <reaction evidence="2">
        <text>eicosanoyl-CoA + 2 malonyl-CoA + 2 H(+) = 4-hydroxy-6-nonadecylpyran-2-one + 2 CO2 + 3 CoA</text>
        <dbReference type="Rhea" id="RHEA:44264"/>
        <dbReference type="ChEBI" id="CHEBI:15378"/>
        <dbReference type="ChEBI" id="CHEBI:16526"/>
        <dbReference type="ChEBI" id="CHEBI:57287"/>
        <dbReference type="ChEBI" id="CHEBI:57380"/>
        <dbReference type="ChEBI" id="CHEBI:57384"/>
        <dbReference type="ChEBI" id="CHEBI:84170"/>
    </reaction>
    <physiologicalReaction direction="left-to-right" evidence="2">
        <dbReference type="Rhea" id="RHEA:44265"/>
    </physiologicalReaction>
</comment>
<comment type="catalytic activity">
    <reaction evidence="2">
        <text>eicosanoyl-CoA + 3 malonyl-CoA + 3 H(+) = 4-hydroxy-6-(2-oxohenicosyl)pyran-2-one + 3 CO2 + 4 CoA</text>
        <dbReference type="Rhea" id="RHEA:44276"/>
        <dbReference type="ChEBI" id="CHEBI:15378"/>
        <dbReference type="ChEBI" id="CHEBI:16526"/>
        <dbReference type="ChEBI" id="CHEBI:57287"/>
        <dbReference type="ChEBI" id="CHEBI:57380"/>
        <dbReference type="ChEBI" id="CHEBI:57384"/>
        <dbReference type="ChEBI" id="CHEBI:84173"/>
    </reaction>
    <physiologicalReaction direction="left-to-right" evidence="2">
        <dbReference type="Rhea" id="RHEA:44277"/>
    </physiologicalReaction>
</comment>
<comment type="catalytic activity">
    <reaction evidence="4">
        <text>9-decenoyl-CoA + 2 malonyl-CoA + 2 H(+) = 4-hydroxy-6-(non-8-en-1-yl)-pyran-2-one + 2 CO2 + 3 CoA</text>
        <dbReference type="Rhea" id="RHEA:45868"/>
        <dbReference type="ChEBI" id="CHEBI:15378"/>
        <dbReference type="ChEBI" id="CHEBI:16526"/>
        <dbReference type="ChEBI" id="CHEBI:57287"/>
        <dbReference type="ChEBI" id="CHEBI:57384"/>
        <dbReference type="ChEBI" id="CHEBI:84214"/>
        <dbReference type="ChEBI" id="CHEBI:85479"/>
    </reaction>
    <physiologicalReaction direction="left-to-right" evidence="4">
        <dbReference type="Rhea" id="RHEA:45869"/>
    </physiologicalReaction>
</comment>
<comment type="catalytic activity">
    <reaction evidence="4">
        <text>9-decenoyl-CoA + 3 malonyl-CoA + 3 H(+) = 4-hydroxy-6-(2-oxoundec-10-en-1-yl)pyran-2-one + 3 CO2 + 4 CoA</text>
        <dbReference type="Rhea" id="RHEA:45924"/>
        <dbReference type="ChEBI" id="CHEBI:15378"/>
        <dbReference type="ChEBI" id="CHEBI:16526"/>
        <dbReference type="ChEBI" id="CHEBI:57287"/>
        <dbReference type="ChEBI" id="CHEBI:57384"/>
        <dbReference type="ChEBI" id="CHEBI:84214"/>
        <dbReference type="ChEBI" id="CHEBI:85494"/>
    </reaction>
    <physiologicalReaction direction="left-to-right" evidence="4">
        <dbReference type="Rhea" id="RHEA:45925"/>
    </physiologicalReaction>
</comment>
<comment type="catalytic activity">
    <reaction evidence="4">
        <text>3-hydroxytetradecanoyl-CoA + 2 malonyl-CoA + 2 H(+) = 4-hydroxy-6-(2-hydroxytridecyl)-pyran-2-one + 2 CO2 + 3 CoA</text>
        <dbReference type="Rhea" id="RHEA:45856"/>
        <dbReference type="ChEBI" id="CHEBI:15378"/>
        <dbReference type="ChEBI" id="CHEBI:16526"/>
        <dbReference type="ChEBI" id="CHEBI:57287"/>
        <dbReference type="ChEBI" id="CHEBI:57384"/>
        <dbReference type="ChEBI" id="CHEBI:84198"/>
        <dbReference type="ChEBI" id="CHEBI:85474"/>
    </reaction>
    <physiologicalReaction direction="left-to-right" evidence="4">
        <dbReference type="Rhea" id="RHEA:45857"/>
    </physiologicalReaction>
</comment>
<comment type="catalytic activity">
    <reaction evidence="4">
        <text>15-hydroxypentadecanoyl-CoA + 2 malonyl-CoA + 2 H(+) = 4-hydroxy-6-(14-hydroxytetradecyl)-pyran-2-one + 2 CO2 + 3 CoA</text>
        <dbReference type="Rhea" id="RHEA:45872"/>
        <dbReference type="ChEBI" id="CHEBI:15378"/>
        <dbReference type="ChEBI" id="CHEBI:16526"/>
        <dbReference type="ChEBI" id="CHEBI:57287"/>
        <dbReference type="ChEBI" id="CHEBI:57384"/>
        <dbReference type="ChEBI" id="CHEBI:84205"/>
        <dbReference type="ChEBI" id="CHEBI:85481"/>
    </reaction>
    <physiologicalReaction direction="left-to-right" evidence="4">
        <dbReference type="Rhea" id="RHEA:45873"/>
    </physiologicalReaction>
</comment>
<comment type="catalytic activity">
    <reaction evidence="4">
        <text>15-hydroxypentadecanoyl-CoA + 3 malonyl-CoA + 3 H(+) = 4-hydroxy-6-(16-hydroxy-2-oxohexadecyl)pyran-2-one + 3 CO2 + 4 CoA</text>
        <dbReference type="Rhea" id="RHEA:45928"/>
        <dbReference type="ChEBI" id="CHEBI:15378"/>
        <dbReference type="ChEBI" id="CHEBI:16526"/>
        <dbReference type="ChEBI" id="CHEBI:57287"/>
        <dbReference type="ChEBI" id="CHEBI:57384"/>
        <dbReference type="ChEBI" id="CHEBI:84205"/>
        <dbReference type="ChEBI" id="CHEBI:85495"/>
    </reaction>
    <physiologicalReaction direction="left-to-right" evidence="4">
        <dbReference type="Rhea" id="RHEA:45929"/>
    </physiologicalReaction>
</comment>
<comment type="catalytic activity">
    <reaction evidence="4">
        <text>16-hydroxyhexadecanoyl-CoA + 2 malonyl-CoA + 2 H(+) = 4-hydroxy-6-(15-hydroxypentadecyl)-pyran-2-one + 2 CO2 + 3 CoA</text>
        <dbReference type="Rhea" id="RHEA:45864"/>
        <dbReference type="ChEBI" id="CHEBI:15378"/>
        <dbReference type="ChEBI" id="CHEBI:16526"/>
        <dbReference type="ChEBI" id="CHEBI:57287"/>
        <dbReference type="ChEBI" id="CHEBI:57384"/>
        <dbReference type="ChEBI" id="CHEBI:84207"/>
        <dbReference type="ChEBI" id="CHEBI:85477"/>
    </reaction>
    <physiologicalReaction direction="left-to-right" evidence="4">
        <dbReference type="Rhea" id="RHEA:45865"/>
    </physiologicalReaction>
</comment>
<comment type="catalytic activity">
    <reaction evidence="4">
        <text>16-hydroxyhexadecanoyl-CoA + 3 malonyl-CoA + 3 H(+) = 4-hydroxy-6-(17-hydroxy-2-oxoheptadecyl)pyran-2-one + 3 CO2 + 4 CoA</text>
        <dbReference type="Rhea" id="RHEA:45920"/>
        <dbReference type="ChEBI" id="CHEBI:15378"/>
        <dbReference type="ChEBI" id="CHEBI:16526"/>
        <dbReference type="ChEBI" id="CHEBI:57287"/>
        <dbReference type="ChEBI" id="CHEBI:57384"/>
        <dbReference type="ChEBI" id="CHEBI:84207"/>
        <dbReference type="ChEBI" id="CHEBI:85492"/>
    </reaction>
    <physiologicalReaction direction="left-to-right" evidence="4">
        <dbReference type="Rhea" id="RHEA:45921"/>
    </physiologicalReaction>
</comment>
<comment type="catalytic activity">
    <reaction evidence="4">
        <text>12-hydroxyoctadecanoyl-CoA + 2 malonyl-CoA + 2 H(+) = 4-hydroxy-6-(11-hydroxyheptadecyl)-pyran-2-one + 2 CO2 + 3 CoA</text>
        <dbReference type="Rhea" id="RHEA:45860"/>
        <dbReference type="ChEBI" id="CHEBI:15378"/>
        <dbReference type="ChEBI" id="CHEBI:16526"/>
        <dbReference type="ChEBI" id="CHEBI:57287"/>
        <dbReference type="ChEBI" id="CHEBI:57384"/>
        <dbReference type="ChEBI" id="CHEBI:84202"/>
        <dbReference type="ChEBI" id="CHEBI:85475"/>
    </reaction>
    <physiologicalReaction direction="left-to-right" evidence="4">
        <dbReference type="Rhea" id="RHEA:45861"/>
    </physiologicalReaction>
</comment>
<comment type="catalytic activity">
    <reaction evidence="4">
        <text>12-hydroxyoctadecanoyl-CoA + 3 malonyl-CoA + 3 H(+) = 4-hydroxy-6-(13-hydroxy-2-oxononadecyl)pyran-2-one + 3 CO2 + 4 CoA</text>
        <dbReference type="Rhea" id="RHEA:45916"/>
        <dbReference type="ChEBI" id="CHEBI:15378"/>
        <dbReference type="ChEBI" id="CHEBI:16526"/>
        <dbReference type="ChEBI" id="CHEBI:57287"/>
        <dbReference type="ChEBI" id="CHEBI:57384"/>
        <dbReference type="ChEBI" id="CHEBI:84202"/>
        <dbReference type="ChEBI" id="CHEBI:85490"/>
    </reaction>
    <physiologicalReaction direction="left-to-right" evidence="4">
        <dbReference type="Rhea" id="RHEA:45917"/>
    </physiologicalReaction>
</comment>
<comment type="catalytic activity">
    <reaction evidence="4">
        <text>2-methylhexadecanoyl-CoA + 2 malonyl-CoA + 2 H(+) = 6-(hexadecan-2-yl)-4-hydroxy-pyran-2-one + 2 CO2 + 3 CoA</text>
        <dbReference type="Rhea" id="RHEA:45876"/>
        <dbReference type="ChEBI" id="CHEBI:15378"/>
        <dbReference type="ChEBI" id="CHEBI:16526"/>
        <dbReference type="ChEBI" id="CHEBI:57287"/>
        <dbReference type="ChEBI" id="CHEBI:57384"/>
        <dbReference type="ChEBI" id="CHEBI:84182"/>
        <dbReference type="ChEBI" id="CHEBI:85482"/>
    </reaction>
    <physiologicalReaction direction="left-to-right" evidence="4">
        <dbReference type="Rhea" id="RHEA:45877"/>
    </physiologicalReaction>
</comment>
<comment type="catalytic activity">
    <reaction evidence="4">
        <text>2-methylhexadecanoyl-CoA + 3 malonyl-CoA + 3 H(+) = 4-hydroxy-6-(3-methyl-2-oxoheptadecyl)pyran-2-one + 3 CO2 + 4 CoA</text>
        <dbReference type="Rhea" id="RHEA:45932"/>
        <dbReference type="ChEBI" id="CHEBI:15378"/>
        <dbReference type="ChEBI" id="CHEBI:16526"/>
        <dbReference type="ChEBI" id="CHEBI:57287"/>
        <dbReference type="ChEBI" id="CHEBI:57384"/>
        <dbReference type="ChEBI" id="CHEBI:84182"/>
        <dbReference type="ChEBI" id="CHEBI:85496"/>
    </reaction>
    <physiologicalReaction direction="left-to-right" evidence="4">
        <dbReference type="Rhea" id="RHEA:45933"/>
    </physiologicalReaction>
</comment>
<comment type="catalytic activity">
    <reaction evidence="4">
        <text>3-methylundecanoyl-CoA + 2 malonyl-CoA + 2 H(+) = 4-hydroxy-6-(2-methyldecyl)-pyran-2-one + 2 CO2 + 3 CoA</text>
        <dbReference type="Rhea" id="RHEA:45880"/>
        <dbReference type="ChEBI" id="CHEBI:15378"/>
        <dbReference type="ChEBI" id="CHEBI:16526"/>
        <dbReference type="ChEBI" id="CHEBI:57287"/>
        <dbReference type="ChEBI" id="CHEBI:57384"/>
        <dbReference type="ChEBI" id="CHEBI:84183"/>
        <dbReference type="ChEBI" id="CHEBI:85483"/>
    </reaction>
    <physiologicalReaction direction="left-to-right" evidence="4">
        <dbReference type="Rhea" id="RHEA:45881"/>
    </physiologicalReaction>
</comment>
<comment type="catalytic activity">
    <reaction evidence="4">
        <text>3-methylundecanoyl-CoA + 3 malonyl-CoA + 3 H(+) = 4-hydroxy-6-(4-methyl-2-oxododecyl)pyran-2-one + 3 CO2 + 4 CoA</text>
        <dbReference type="Rhea" id="RHEA:45936"/>
        <dbReference type="ChEBI" id="CHEBI:15378"/>
        <dbReference type="ChEBI" id="CHEBI:16526"/>
        <dbReference type="ChEBI" id="CHEBI:57287"/>
        <dbReference type="ChEBI" id="CHEBI:57384"/>
        <dbReference type="ChEBI" id="CHEBI:84183"/>
        <dbReference type="ChEBI" id="CHEBI:85497"/>
    </reaction>
    <physiologicalReaction direction="left-to-right" evidence="4">
        <dbReference type="Rhea" id="RHEA:45937"/>
    </physiologicalReaction>
</comment>
<comment type="catalytic activity">
    <reaction evidence="4">
        <text>12-methyltridecanoyl-CoA + 2 malonyl-CoA + 2 H(+) = 4-hydroxy-6-(11-methyldodecyl)-pyran-2-one + 2 CO2 + 3 CoA</text>
        <dbReference type="Rhea" id="RHEA:45888"/>
        <dbReference type="ChEBI" id="CHEBI:15378"/>
        <dbReference type="ChEBI" id="CHEBI:16526"/>
        <dbReference type="ChEBI" id="CHEBI:57287"/>
        <dbReference type="ChEBI" id="CHEBI:57384"/>
        <dbReference type="ChEBI" id="CHEBI:84195"/>
        <dbReference type="ChEBI" id="CHEBI:85485"/>
    </reaction>
    <physiologicalReaction direction="left-to-right" evidence="4">
        <dbReference type="Rhea" id="RHEA:45889"/>
    </physiologicalReaction>
</comment>
<comment type="catalytic activity">
    <reaction evidence="4">
        <text>12-methyltridecanoyl-CoA + 3 malonyl-CoA + 3 H(+) = 4-hydroxy-6-(13-methyl-2-oxotetradecyl)pyran-2-one + 3 CO2 + 4 CoA</text>
        <dbReference type="Rhea" id="RHEA:45944"/>
        <dbReference type="ChEBI" id="CHEBI:15378"/>
        <dbReference type="ChEBI" id="CHEBI:16526"/>
        <dbReference type="ChEBI" id="CHEBI:57287"/>
        <dbReference type="ChEBI" id="CHEBI:57384"/>
        <dbReference type="ChEBI" id="CHEBI:84195"/>
        <dbReference type="ChEBI" id="CHEBI:85499"/>
    </reaction>
    <physiologicalReaction direction="left-to-right" evidence="4">
        <dbReference type="Rhea" id="RHEA:45945"/>
    </physiologicalReaction>
</comment>
<comment type="catalytic activity">
    <reaction evidence="4">
        <text>12-methyloctadecanoyl-CoA + 2 malonyl-CoA + 2 H(+) = 4-hydroxy-6-(11-methylheptadecyl)-pyran-2-one + 2 CO2 + 3 CoA</text>
        <dbReference type="Rhea" id="RHEA:45884"/>
        <dbReference type="ChEBI" id="CHEBI:15378"/>
        <dbReference type="ChEBI" id="CHEBI:16526"/>
        <dbReference type="ChEBI" id="CHEBI:57287"/>
        <dbReference type="ChEBI" id="CHEBI:57384"/>
        <dbReference type="ChEBI" id="CHEBI:84181"/>
        <dbReference type="ChEBI" id="CHEBI:85484"/>
    </reaction>
    <physiologicalReaction direction="left-to-right" evidence="4">
        <dbReference type="Rhea" id="RHEA:45885"/>
    </physiologicalReaction>
</comment>
<comment type="catalytic activity">
    <reaction evidence="4">
        <text>12-methyloctadecanoyl-CoA + 3 malonyl-CoA + 3 H(+) = 4-hydroxy-6-(13-methyl-2-oxononadecyl)pyran-2-one + 3 CO2 + 4 CoA</text>
        <dbReference type="Rhea" id="RHEA:45940"/>
        <dbReference type="ChEBI" id="CHEBI:15378"/>
        <dbReference type="ChEBI" id="CHEBI:16526"/>
        <dbReference type="ChEBI" id="CHEBI:57287"/>
        <dbReference type="ChEBI" id="CHEBI:57384"/>
        <dbReference type="ChEBI" id="CHEBI:84181"/>
        <dbReference type="ChEBI" id="CHEBI:85498"/>
    </reaction>
    <physiologicalReaction direction="left-to-right" evidence="4">
        <dbReference type="Rhea" id="RHEA:45941"/>
    </physiologicalReaction>
</comment>
<comment type="biophysicochemical properties">
    <kinetics>
        <KM evidence="2">4.2 uM for lauroyl-CoA (at 30 degrees Celsius and at pH 7.5)</KM>
        <KM evidence="2">5.4 uM for palmitoyl-CoA (at 30 degrees Celsius and at pH 7.5)</KM>
        <KM evidence="2">6.1 uM for arachidoyl-CoA (at 30 degrees Celsius and at pH 7.5)</KM>
        <KM evidence="2">19.2 uM for hexanoyl-CoA (at 30 degrees Celsius and at pH 7.5)</KM>
        <KM evidence="2">49.2 uM for acetyl-CoA (at 30 degrees Celsius and at pH 7.5)</KM>
        <KM evidence="2">58.4 uM for malonyl-CoA (at 30 degrees Celsius and at pH 7.5)</KM>
    </kinetics>
</comment>
<comment type="pathway">
    <text evidence="5">Lipid metabolism; fatty acid biosynthesis.</text>
</comment>
<comment type="subunit">
    <text evidence="3">Homodimer.</text>
</comment>
<comment type="similarity">
    <text evidence="5">Belongs to the thiolase-like superfamily. Chalcone/stilbene synthases family.</text>
</comment>
<organism>
    <name type="scientific">Mycobacterium tuberculosis (strain ATCC 25618 / H37Rv)</name>
    <dbReference type="NCBI Taxonomy" id="83332"/>
    <lineage>
        <taxon>Bacteria</taxon>
        <taxon>Bacillati</taxon>
        <taxon>Actinomycetota</taxon>
        <taxon>Actinomycetes</taxon>
        <taxon>Mycobacteriales</taxon>
        <taxon>Mycobacteriaceae</taxon>
        <taxon>Mycobacterium</taxon>
        <taxon>Mycobacterium tuberculosis complex</taxon>
    </lineage>
</organism>
<name>PKS18_MYCTU</name>
<reference key="1">
    <citation type="journal article" date="1998" name="Nature">
        <title>Deciphering the biology of Mycobacterium tuberculosis from the complete genome sequence.</title>
        <authorList>
            <person name="Cole S.T."/>
            <person name="Brosch R."/>
            <person name="Parkhill J."/>
            <person name="Garnier T."/>
            <person name="Churcher C.M."/>
            <person name="Harris D.E."/>
            <person name="Gordon S.V."/>
            <person name="Eiglmeier K."/>
            <person name="Gas S."/>
            <person name="Barry C.E. III"/>
            <person name="Tekaia F."/>
            <person name="Badcock K."/>
            <person name="Basham D."/>
            <person name="Brown D."/>
            <person name="Chillingworth T."/>
            <person name="Connor R."/>
            <person name="Davies R.M."/>
            <person name="Devlin K."/>
            <person name="Feltwell T."/>
            <person name="Gentles S."/>
            <person name="Hamlin N."/>
            <person name="Holroyd S."/>
            <person name="Hornsby T."/>
            <person name="Jagels K."/>
            <person name="Krogh A."/>
            <person name="McLean J."/>
            <person name="Moule S."/>
            <person name="Murphy L.D."/>
            <person name="Oliver S."/>
            <person name="Osborne J."/>
            <person name="Quail M.A."/>
            <person name="Rajandream M.A."/>
            <person name="Rogers J."/>
            <person name="Rutter S."/>
            <person name="Seeger K."/>
            <person name="Skelton S."/>
            <person name="Squares S."/>
            <person name="Squares R."/>
            <person name="Sulston J.E."/>
            <person name="Taylor K."/>
            <person name="Whitehead S."/>
            <person name="Barrell B.G."/>
        </authorList>
    </citation>
    <scope>NUCLEOTIDE SEQUENCE [LARGE SCALE GENOMIC DNA]</scope>
    <source>
        <strain>ATCC 25618 / H37Rv</strain>
    </source>
</reference>
<reference key="2">
    <citation type="journal article" date="2003" name="J. Biol. Chem.">
        <title>A new family of type III polyketide synthases in Mycobacterium tuberculosis.</title>
        <authorList>
            <person name="Saxena P."/>
            <person name="Yadav G."/>
            <person name="Mohanty D."/>
            <person name="Gokhale R.S."/>
        </authorList>
    </citation>
    <scope>FUNCTION AS A POLYKETIDE SYNTHASE</scope>
    <scope>STARTER UNIT SPECIFICITY</scope>
    <scope>CATALYTIC ACTIVITY</scope>
    <scope>BIOPHYSICOCHEMICAL PROPERTIES</scope>
    <scope>MUTAGENESIS OF ALA-148; LYS-318 AND LEU-348</scope>
    <source>
        <strain>ATCC 25618 / H37Rv</strain>
    </source>
</reference>
<reference key="3">
    <citation type="journal article" date="2005" name="J. Am. Chem. Soc.">
        <title>Promiscuous fatty acyl CoA ligases produce acyl-CoA and acyl-SNAC precursors for polyketide biosynthesis.</title>
        <authorList>
            <person name="Arora P."/>
            <person name="Vats A."/>
            <person name="Saxena P."/>
            <person name="Mohanty D."/>
            <person name="Gokhale R.S."/>
        </authorList>
    </citation>
    <scope>FUNCTION</scope>
    <scope>CATALYTIC ACTIVITY</scope>
</reference>
<reference evidence="7 8" key="4">
    <citation type="journal article" date="2004" name="Nat. Struct. Mol. Biol.">
        <title>A novel tunnel in mycobacterial type III polyketide synthase reveals the structural basis for generating diverse metabolites.</title>
        <authorList>
            <person name="Sankaranarayanan R."/>
            <person name="Saxena P."/>
            <person name="Marathe U.B."/>
            <person name="Gokhale R.S."/>
            <person name="Shanmugam V.M."/>
            <person name="Rukmini R."/>
        </authorList>
    </citation>
    <scope>X-RAY CRYSTALLOGRAPHY (2.25 ANGSTROMS) OF MUTANT PHE-205 IN COMPLEX WITH SUBSTRATE</scope>
    <scope>FUNCTION</scope>
    <scope>CATALYTIC ACTIVITY</scope>
    <scope>STARTER UNIT SPECIFICITY</scope>
    <scope>SUBUNIT</scope>
    <scope>ACTIVE SITE</scope>
    <scope>MUTAGENESIS OF THR-144; CYS-175; CYS-205; ALA-209 AND CYS-275</scope>
    <source>
        <strain>ATCC 25618 / H37Rv</strain>
    </source>
</reference>
<dbReference type="EC" id="2.3.1.-" evidence="2 3 4"/>
<dbReference type="EMBL" id="AL123456">
    <property type="protein sequence ID" value="CCP44131.1"/>
    <property type="molecule type" value="Genomic_DNA"/>
</dbReference>
<dbReference type="PIR" id="A70958">
    <property type="entry name" value="A70958"/>
</dbReference>
<dbReference type="RefSeq" id="WP_003407185.1">
    <property type="nucleotide sequence ID" value="NZ_NVQJ01000050.1"/>
</dbReference>
<dbReference type="RefSeq" id="YP_177803.1">
    <property type="nucleotide sequence ID" value="NC_000962.3"/>
</dbReference>
<dbReference type="PDB" id="1TED">
    <property type="method" value="X-ray"/>
    <property type="resolution" value="2.25 A"/>
    <property type="chains" value="A/B/C/D=1-393"/>
</dbReference>
<dbReference type="PDB" id="1TEE">
    <property type="method" value="X-ray"/>
    <property type="resolution" value="2.90 A"/>
    <property type="chains" value="A/B/C/D=1-393"/>
</dbReference>
<dbReference type="PDBsum" id="1TED"/>
<dbReference type="PDBsum" id="1TEE"/>
<dbReference type="SMR" id="P9WPF1"/>
<dbReference type="FunCoup" id="P9WPF1">
    <property type="interactions" value="1"/>
</dbReference>
<dbReference type="STRING" id="83332.Rv1372"/>
<dbReference type="DrugBank" id="DB08231">
    <property type="generic name" value="Myristic acid"/>
</dbReference>
<dbReference type="SwissLipids" id="SLP:000001035"/>
<dbReference type="PaxDb" id="83332-Rv1372"/>
<dbReference type="DNASU" id="886797"/>
<dbReference type="GeneID" id="886797"/>
<dbReference type="KEGG" id="mtu:Rv1372"/>
<dbReference type="KEGG" id="mtv:RVBD_1372"/>
<dbReference type="TubercuList" id="Rv1372"/>
<dbReference type="eggNOG" id="COG3424">
    <property type="taxonomic scope" value="Bacteria"/>
</dbReference>
<dbReference type="InParanoid" id="P9WPF1"/>
<dbReference type="OrthoDB" id="9786288at2"/>
<dbReference type="PhylomeDB" id="P9WPF1"/>
<dbReference type="SABIO-RK" id="P9WPF1"/>
<dbReference type="UniPathway" id="UPA00094"/>
<dbReference type="EvolutionaryTrace" id="P9WPF1"/>
<dbReference type="Proteomes" id="UP000001584">
    <property type="component" value="Chromosome"/>
</dbReference>
<dbReference type="GO" id="GO:0016747">
    <property type="term" value="F:acyltransferase activity, transferring groups other than amino-acyl groups"/>
    <property type="evidence" value="ECO:0000318"/>
    <property type="project" value="GO_Central"/>
</dbReference>
<dbReference type="GO" id="GO:0009715">
    <property type="term" value="P:chalcone biosynthetic process"/>
    <property type="evidence" value="ECO:0000314"/>
    <property type="project" value="MTBBASE"/>
</dbReference>
<dbReference type="GO" id="GO:0006633">
    <property type="term" value="P:fatty acid biosynthetic process"/>
    <property type="evidence" value="ECO:0007669"/>
    <property type="project" value="UniProtKB-UniPathway"/>
</dbReference>
<dbReference type="GO" id="GO:0030639">
    <property type="term" value="P:polyketide biosynthetic process"/>
    <property type="evidence" value="ECO:0000318"/>
    <property type="project" value="GO_Central"/>
</dbReference>
<dbReference type="CDD" id="cd00831">
    <property type="entry name" value="CHS_like"/>
    <property type="match status" value="1"/>
</dbReference>
<dbReference type="FunFam" id="3.40.47.10:FF:000014">
    <property type="entry name" value="Chalcone synthase 1"/>
    <property type="match status" value="1"/>
</dbReference>
<dbReference type="Gene3D" id="3.40.47.10">
    <property type="match status" value="2"/>
</dbReference>
<dbReference type="InterPro" id="IPR012328">
    <property type="entry name" value="Chalcone/stilbene_synt_C"/>
</dbReference>
<dbReference type="InterPro" id="IPR001099">
    <property type="entry name" value="Chalcone/stilbene_synt_N"/>
</dbReference>
<dbReference type="InterPro" id="IPR011141">
    <property type="entry name" value="Polyketide_synthase_type-III"/>
</dbReference>
<dbReference type="InterPro" id="IPR016039">
    <property type="entry name" value="Thiolase-like"/>
</dbReference>
<dbReference type="PANTHER" id="PTHR11877">
    <property type="entry name" value="HYDROXYMETHYLGLUTARYL-COA SYNTHASE"/>
    <property type="match status" value="1"/>
</dbReference>
<dbReference type="PANTHER" id="PTHR11877:SF46">
    <property type="entry name" value="TYPE III POLYKETIDE SYNTHASE A"/>
    <property type="match status" value="1"/>
</dbReference>
<dbReference type="Pfam" id="PF02797">
    <property type="entry name" value="Chal_sti_synt_C"/>
    <property type="match status" value="1"/>
</dbReference>
<dbReference type="Pfam" id="PF00195">
    <property type="entry name" value="Chal_sti_synt_N"/>
    <property type="match status" value="1"/>
</dbReference>
<dbReference type="PIRSF" id="PIRSF000451">
    <property type="entry name" value="PKS_III"/>
    <property type="match status" value="1"/>
</dbReference>
<dbReference type="SUPFAM" id="SSF53901">
    <property type="entry name" value="Thiolase-like"/>
    <property type="match status" value="1"/>
</dbReference>
<evidence type="ECO:0000256" key="1">
    <source>
        <dbReference type="SAM" id="MobiDB-lite"/>
    </source>
</evidence>
<evidence type="ECO:0000269" key="2">
    <source>
    </source>
</evidence>
<evidence type="ECO:0000269" key="3">
    <source>
    </source>
</evidence>
<evidence type="ECO:0000269" key="4">
    <source>
    </source>
</evidence>
<evidence type="ECO:0000305" key="5"/>
<evidence type="ECO:0000305" key="6">
    <source>
    </source>
</evidence>
<evidence type="ECO:0007744" key="7">
    <source>
        <dbReference type="PDB" id="1TED"/>
    </source>
</evidence>
<evidence type="ECO:0007744" key="8">
    <source>
        <dbReference type="PDB" id="1TEE"/>
    </source>
</evidence>
<evidence type="ECO:0007829" key="9">
    <source>
        <dbReference type="PDB" id="1TED"/>
    </source>
</evidence>
<evidence type="ECO:0007829" key="10">
    <source>
        <dbReference type="PDB" id="1TEE"/>
    </source>
</evidence>